<organism>
    <name type="scientific">Pyrococcus abyssi (strain GE5 / Orsay)</name>
    <dbReference type="NCBI Taxonomy" id="272844"/>
    <lineage>
        <taxon>Archaea</taxon>
        <taxon>Methanobacteriati</taxon>
        <taxon>Methanobacteriota</taxon>
        <taxon>Thermococci</taxon>
        <taxon>Thermococcales</taxon>
        <taxon>Thermococcaceae</taxon>
        <taxon>Pyrococcus</taxon>
    </lineage>
</organism>
<gene>
    <name evidence="1" type="primary">rpl5</name>
    <name type="ordered locus">PYRAB03280</name>
    <name type="ORF">PAB2130</name>
</gene>
<reference key="1">
    <citation type="journal article" date="2003" name="Mol. Microbiol.">
        <title>An integrated analysis of the genome of the hyperthermophilic archaeon Pyrococcus abyssi.</title>
        <authorList>
            <person name="Cohen G.N."/>
            <person name="Barbe V."/>
            <person name="Flament D."/>
            <person name="Galperin M."/>
            <person name="Heilig R."/>
            <person name="Lecompte O."/>
            <person name="Poch O."/>
            <person name="Prieur D."/>
            <person name="Querellou J."/>
            <person name="Ripp R."/>
            <person name="Thierry J.-C."/>
            <person name="Van der Oost J."/>
            <person name="Weissenbach J."/>
            <person name="Zivanovic Y."/>
            <person name="Forterre P."/>
        </authorList>
    </citation>
    <scope>NUCLEOTIDE SEQUENCE [LARGE SCALE GENOMIC DNA]</scope>
    <source>
        <strain>GE5 / Orsay</strain>
    </source>
</reference>
<reference key="2">
    <citation type="journal article" date="2012" name="Curr. Microbiol.">
        <title>Re-annotation of two hyperthermophilic archaea Pyrococcus abyssi GE5 and Pyrococcus furiosus DSM 3638.</title>
        <authorList>
            <person name="Gao J."/>
            <person name="Wang J."/>
        </authorList>
    </citation>
    <scope>GENOME REANNOTATION</scope>
    <source>
        <strain>GE5 / Orsay</strain>
    </source>
</reference>
<proteinExistence type="inferred from homology"/>
<keyword id="KW-0687">Ribonucleoprotein</keyword>
<keyword id="KW-0689">Ribosomal protein</keyword>
<keyword id="KW-0694">RNA-binding</keyword>
<keyword id="KW-0699">rRNA-binding</keyword>
<keyword id="KW-0820">tRNA-binding</keyword>
<sequence length="188" mass="21509">MAITIPNREEILADWEAHPMRKPRIEKVTINIGVGESGERLTKAEIMLERLTGQKPIRRKAKKTNRDFGIRRGEPIAVKVTLRGPKAYEMLKRLLAAVDNRLKASSFDEHGNVCFGIDEHINIPGVEYDPEIGIFGMDVCVTLERPGFRVARRKRKRAKIPTRHKLTKEEGMVYMMEEFGVEIVEEEG</sequence>
<evidence type="ECO:0000255" key="1">
    <source>
        <dbReference type="HAMAP-Rule" id="MF_01333"/>
    </source>
</evidence>
<evidence type="ECO:0000305" key="2"/>
<dbReference type="EMBL" id="AJ248284">
    <property type="protein sequence ID" value="CAB49250.1"/>
    <property type="molecule type" value="Genomic_DNA"/>
</dbReference>
<dbReference type="EMBL" id="HE613800">
    <property type="protein sequence ID" value="CCE69705.1"/>
    <property type="molecule type" value="Genomic_DNA"/>
</dbReference>
<dbReference type="PIR" id="C75146">
    <property type="entry name" value="C75146"/>
</dbReference>
<dbReference type="RefSeq" id="WP_010867450.1">
    <property type="nucleotide sequence ID" value="NC_000868.1"/>
</dbReference>
<dbReference type="SMR" id="Q9V1U9"/>
<dbReference type="STRING" id="272844.PAB2130"/>
<dbReference type="KEGG" id="pab:PAB2130"/>
<dbReference type="PATRIC" id="fig|272844.11.peg.349"/>
<dbReference type="eggNOG" id="arCOG04092">
    <property type="taxonomic scope" value="Archaea"/>
</dbReference>
<dbReference type="HOGENOM" id="CLU_061015_3_0_2"/>
<dbReference type="OrthoDB" id="372044at2157"/>
<dbReference type="PhylomeDB" id="Q9V1U9"/>
<dbReference type="Proteomes" id="UP000000810">
    <property type="component" value="Chromosome"/>
</dbReference>
<dbReference type="Proteomes" id="UP000009139">
    <property type="component" value="Chromosome"/>
</dbReference>
<dbReference type="GO" id="GO:1990904">
    <property type="term" value="C:ribonucleoprotein complex"/>
    <property type="evidence" value="ECO:0007669"/>
    <property type="project" value="UniProtKB-KW"/>
</dbReference>
<dbReference type="GO" id="GO:0005840">
    <property type="term" value="C:ribosome"/>
    <property type="evidence" value="ECO:0007669"/>
    <property type="project" value="UniProtKB-KW"/>
</dbReference>
<dbReference type="GO" id="GO:0019843">
    <property type="term" value="F:rRNA binding"/>
    <property type="evidence" value="ECO:0007669"/>
    <property type="project" value="UniProtKB-UniRule"/>
</dbReference>
<dbReference type="GO" id="GO:0003735">
    <property type="term" value="F:structural constituent of ribosome"/>
    <property type="evidence" value="ECO:0007669"/>
    <property type="project" value="InterPro"/>
</dbReference>
<dbReference type="GO" id="GO:0000049">
    <property type="term" value="F:tRNA binding"/>
    <property type="evidence" value="ECO:0007669"/>
    <property type="project" value="UniProtKB-UniRule"/>
</dbReference>
<dbReference type="GO" id="GO:0006412">
    <property type="term" value="P:translation"/>
    <property type="evidence" value="ECO:0007669"/>
    <property type="project" value="UniProtKB-UniRule"/>
</dbReference>
<dbReference type="FunFam" id="3.30.1440.10:FF:000002">
    <property type="entry name" value="60S ribosomal protein L11"/>
    <property type="match status" value="1"/>
</dbReference>
<dbReference type="Gene3D" id="3.30.1440.10">
    <property type="match status" value="1"/>
</dbReference>
<dbReference type="HAMAP" id="MF_01333_A">
    <property type="entry name" value="Ribosomal_uL5_A"/>
    <property type="match status" value="1"/>
</dbReference>
<dbReference type="InterPro" id="IPR002132">
    <property type="entry name" value="Ribosomal_uL5"/>
</dbReference>
<dbReference type="InterPro" id="IPR022804">
    <property type="entry name" value="Ribosomal_uL5_arc"/>
</dbReference>
<dbReference type="InterPro" id="IPR031309">
    <property type="entry name" value="Ribosomal_uL5_C"/>
</dbReference>
<dbReference type="InterPro" id="IPR022803">
    <property type="entry name" value="Ribosomal_uL5_dom_sf"/>
</dbReference>
<dbReference type="InterPro" id="IPR031310">
    <property type="entry name" value="Ribosomal_uL5_N"/>
</dbReference>
<dbReference type="NCBIfam" id="NF003258">
    <property type="entry name" value="PRK04219.1"/>
    <property type="match status" value="1"/>
</dbReference>
<dbReference type="PANTHER" id="PTHR11994">
    <property type="entry name" value="60S RIBOSOMAL PROTEIN L11-RELATED"/>
    <property type="match status" value="1"/>
</dbReference>
<dbReference type="Pfam" id="PF00281">
    <property type="entry name" value="Ribosomal_L5"/>
    <property type="match status" value="1"/>
</dbReference>
<dbReference type="Pfam" id="PF00673">
    <property type="entry name" value="Ribosomal_L5_C"/>
    <property type="match status" value="1"/>
</dbReference>
<dbReference type="PIRSF" id="PIRSF002161">
    <property type="entry name" value="Ribosomal_L5"/>
    <property type="match status" value="1"/>
</dbReference>
<dbReference type="SUPFAM" id="SSF55282">
    <property type="entry name" value="RL5-like"/>
    <property type="match status" value="1"/>
</dbReference>
<name>RL5_PYRAB</name>
<accession>Q9V1U9</accession>
<accession>G8ZHW2</accession>
<protein>
    <recommendedName>
        <fullName evidence="1">Large ribosomal subunit protein uL5</fullName>
    </recommendedName>
    <alternativeName>
        <fullName evidence="2">50S ribosomal protein L5</fullName>
    </alternativeName>
</protein>
<feature type="chain" id="PRO_0000125063" description="Large ribosomal subunit protein uL5">
    <location>
        <begin position="1"/>
        <end position="188"/>
    </location>
</feature>
<comment type="function">
    <text evidence="1">This is one of the proteins that bind and probably mediate the attachment of the 5S RNA into the large ribosomal subunit, where it forms part of the central protuberance. In the 70S ribosome it contacts protein S13 of the 30S subunit (bridge B1b), connecting the 2 subunits; this bridge is implicated in subunit movement. May contact the P site tRNA; the 5S rRNA and some of its associated proteins might help stabilize positioning of ribosome-bound tRNAs.</text>
</comment>
<comment type="subunit">
    <text evidence="1">Part of the 50S ribosomal subunit; contacts the 5S rRNA and probably tRNA. Forms a bridge to the 30S subunit in the 70S ribosome.</text>
</comment>
<comment type="similarity">
    <text evidence="1">Belongs to the universal ribosomal protein uL5 family.</text>
</comment>